<protein>
    <recommendedName>
        <fullName>Protein TBF1</fullName>
    </recommendedName>
    <alternativeName>
        <fullName>TBF-alpha</fullName>
    </alternativeName>
    <alternativeName>
        <fullName>TTAGGG repeat-binding factor 1</fullName>
    </alternativeName>
</protein>
<dbReference type="EMBL" id="X69394">
    <property type="protein sequence ID" value="CAA49191.1"/>
    <property type="molecule type" value="Genomic_DNA"/>
</dbReference>
<dbReference type="EMBL" id="U43703">
    <property type="protein sequence ID" value="AAB68230.1"/>
    <property type="molecule type" value="Genomic_DNA"/>
</dbReference>
<dbReference type="EMBL" id="BK006949">
    <property type="protein sequence ID" value="DAA11305.1"/>
    <property type="molecule type" value="Genomic_DNA"/>
</dbReference>
<dbReference type="PIR" id="S69055">
    <property type="entry name" value="S69055"/>
</dbReference>
<dbReference type="RefSeq" id="NP_015197.1">
    <property type="nucleotide sequence ID" value="NM_001183942.1"/>
</dbReference>
<dbReference type="PDB" id="8X6D">
    <property type="method" value="X-ray"/>
    <property type="resolution" value="2.00 A"/>
    <property type="chains" value="B/E/F=400-500"/>
</dbReference>
<dbReference type="PDB" id="8X6E">
    <property type="method" value="X-ray"/>
    <property type="resolution" value="2.00 A"/>
    <property type="chains" value="A=1-310"/>
</dbReference>
<dbReference type="PDBsum" id="8X6D"/>
<dbReference type="PDBsum" id="8X6E"/>
<dbReference type="SMR" id="Q02457"/>
<dbReference type="BioGRID" id="36053">
    <property type="interactions" value="308"/>
</dbReference>
<dbReference type="DIP" id="DIP-1918N"/>
<dbReference type="FunCoup" id="Q02457">
    <property type="interactions" value="794"/>
</dbReference>
<dbReference type="IntAct" id="Q02457">
    <property type="interactions" value="24"/>
</dbReference>
<dbReference type="MINT" id="Q02457"/>
<dbReference type="STRING" id="4932.YPL128C"/>
<dbReference type="iPTMnet" id="Q02457"/>
<dbReference type="PaxDb" id="4932-YPL128C"/>
<dbReference type="PeptideAtlas" id="Q02457"/>
<dbReference type="EnsemblFungi" id="YPL128C_mRNA">
    <property type="protein sequence ID" value="YPL128C"/>
    <property type="gene ID" value="YPL128C"/>
</dbReference>
<dbReference type="GeneID" id="855975"/>
<dbReference type="KEGG" id="sce:YPL128C"/>
<dbReference type="AGR" id="SGD:S000006049"/>
<dbReference type="SGD" id="S000006049">
    <property type="gene designation" value="TBF1"/>
</dbReference>
<dbReference type="VEuPathDB" id="FungiDB:YPL128C"/>
<dbReference type="eggNOG" id="ENOG502QRT9">
    <property type="taxonomic scope" value="Eukaryota"/>
</dbReference>
<dbReference type="HOGENOM" id="CLU_008791_4_0_1"/>
<dbReference type="InParanoid" id="Q02457"/>
<dbReference type="OMA" id="IQEQQIH"/>
<dbReference type="OrthoDB" id="3366990at2759"/>
<dbReference type="BioCyc" id="YEAST:G3O-34027-MONOMER"/>
<dbReference type="BioGRID-ORCS" id="855975">
    <property type="hits" value="1 hit in 13 CRISPR screens"/>
</dbReference>
<dbReference type="PRO" id="PR:Q02457"/>
<dbReference type="Proteomes" id="UP000002311">
    <property type="component" value="Chromosome XVI"/>
</dbReference>
<dbReference type="RNAct" id="Q02457">
    <property type="molecule type" value="protein"/>
</dbReference>
<dbReference type="GO" id="GO:0000781">
    <property type="term" value="C:chromosome, telomeric region"/>
    <property type="evidence" value="ECO:0000314"/>
    <property type="project" value="SGD"/>
</dbReference>
<dbReference type="GO" id="GO:0005634">
    <property type="term" value="C:nucleus"/>
    <property type="evidence" value="ECO:0007005"/>
    <property type="project" value="SGD"/>
</dbReference>
<dbReference type="GO" id="GO:0043035">
    <property type="term" value="F:chromatin insulator sequence binding"/>
    <property type="evidence" value="ECO:0000314"/>
    <property type="project" value="SGD"/>
</dbReference>
<dbReference type="GO" id="GO:0000981">
    <property type="term" value="F:DNA-binding transcription factor activity, RNA polymerase II-specific"/>
    <property type="evidence" value="ECO:0000314"/>
    <property type="project" value="SGD"/>
</dbReference>
<dbReference type="GO" id="GO:0003691">
    <property type="term" value="F:double-stranded telomeric DNA binding"/>
    <property type="evidence" value="ECO:0000318"/>
    <property type="project" value="GO_Central"/>
</dbReference>
<dbReference type="GO" id="GO:0042803">
    <property type="term" value="F:protein homodimerization activity"/>
    <property type="evidence" value="ECO:0007669"/>
    <property type="project" value="InterPro"/>
</dbReference>
<dbReference type="GO" id="GO:0000978">
    <property type="term" value="F:RNA polymerase II cis-regulatory region sequence-specific DNA binding"/>
    <property type="evidence" value="ECO:0000314"/>
    <property type="project" value="SGD"/>
</dbReference>
<dbReference type="GO" id="GO:0042162">
    <property type="term" value="F:telomeric DNA binding"/>
    <property type="evidence" value="ECO:0000314"/>
    <property type="project" value="SGD"/>
</dbReference>
<dbReference type="GO" id="GO:0006338">
    <property type="term" value="P:chromatin remodeling"/>
    <property type="evidence" value="ECO:0000315"/>
    <property type="project" value="SGD"/>
</dbReference>
<dbReference type="GO" id="GO:0032211">
    <property type="term" value="P:negative regulation of telomere maintenance via telomerase"/>
    <property type="evidence" value="ECO:0000316"/>
    <property type="project" value="SGD"/>
</dbReference>
<dbReference type="GO" id="GO:0001015">
    <property type="term" value="P:snoRNA transcription by RNA polymerase II"/>
    <property type="evidence" value="ECO:0000314"/>
    <property type="project" value="SGD"/>
</dbReference>
<dbReference type="GO" id="GO:0010833">
    <property type="term" value="P:telomere maintenance via telomere lengthening"/>
    <property type="evidence" value="ECO:0000314"/>
    <property type="project" value="SGD"/>
</dbReference>
<dbReference type="CDD" id="cd11660">
    <property type="entry name" value="SANT_TRF"/>
    <property type="match status" value="1"/>
</dbReference>
<dbReference type="FunFam" id="1.10.10.60:FF:000137">
    <property type="entry name" value="MYB DNA binding protein"/>
    <property type="match status" value="1"/>
</dbReference>
<dbReference type="Gene3D" id="1.10.10.60">
    <property type="entry name" value="Homeodomain-like"/>
    <property type="match status" value="1"/>
</dbReference>
<dbReference type="InterPro" id="IPR009057">
    <property type="entry name" value="Homeodomain-like_sf"/>
</dbReference>
<dbReference type="InterPro" id="IPR017930">
    <property type="entry name" value="Myb_dom"/>
</dbReference>
<dbReference type="InterPro" id="IPR001005">
    <property type="entry name" value="SANT/Myb"/>
</dbReference>
<dbReference type="InterPro" id="IPR013867">
    <property type="entry name" value="Telomere_rpt-bd_fac_dimer_dom"/>
</dbReference>
<dbReference type="InterPro" id="IPR052833">
    <property type="entry name" value="Telomeric_DNA-bd_trans-reg"/>
</dbReference>
<dbReference type="PANTHER" id="PTHR47807">
    <property type="entry name" value="PROTEIN TBF1"/>
    <property type="match status" value="1"/>
</dbReference>
<dbReference type="PANTHER" id="PTHR47807:SF1">
    <property type="entry name" value="PROTEIN TBF1"/>
    <property type="match status" value="1"/>
</dbReference>
<dbReference type="Pfam" id="PF00249">
    <property type="entry name" value="Myb_DNA-binding"/>
    <property type="match status" value="1"/>
</dbReference>
<dbReference type="Pfam" id="PF08558">
    <property type="entry name" value="TRF"/>
    <property type="match status" value="1"/>
</dbReference>
<dbReference type="SMART" id="SM00717">
    <property type="entry name" value="SANT"/>
    <property type="match status" value="1"/>
</dbReference>
<dbReference type="SUPFAM" id="SSF46689">
    <property type="entry name" value="Homeodomain-like"/>
    <property type="match status" value="1"/>
</dbReference>
<dbReference type="PROSITE" id="PS51294">
    <property type="entry name" value="HTH_MYB"/>
    <property type="match status" value="1"/>
</dbReference>
<sequence>MDSQVPNNNESLNRFNDIIQSLPARTRLTICSLCLLDNISTQLLRFLILNANSPNIIAVLTDQTAFLSSGETEIFQTLVKLFKQIRMIYHTRSPLLSVHDVAPGLWFPNSPPPLILRGHEAFIITAIRKANLLTFLLTSLNCLNYGFELLQSIFLDIFCPNTNTVGNNSLEQSGKFLKSQAILYLDLKTQAYIAGLKEFQDETNEISLEKKQELLDLIFPSNLADILVQRRTGDSGDITLLTPSEKDFVERCDRRRENLKIVQDFNSLTQSYEWAQFIRELLDYCNKNMGLIIWGRKGRGKSPLYDFDVNEFDPQVLFSTGTRTVEFMDDQNQPSSASAFLSTARPNHYSTHTPTTDVSSKNPAITQSIVDAAVAASMSNSSSGPHSSHNNSSNSNNNGSIGLRKPKAKRTWSKEEEEALVEGLKEVGPSWSKILDLYGPGGKITENLKNRTQVQLKDKARNWKLQYLKSGKPLPDYLIKVTGNLEKIYKAKKKFSQSPNSSTIMEQNLSQHPSSAASATEDTQTHQEDSHGQNSDNMPSNGLFGNSTSDNTGFDPHLEDGM</sequence>
<gene>
    <name type="primary">TBF1</name>
    <name type="ordered locus">YPL128C</name>
    <name type="ORF">LPI16C</name>
</gene>
<feature type="chain" id="PRO_0000197125" description="Protein TBF1">
    <location>
        <begin position="1"/>
        <end position="562"/>
    </location>
</feature>
<feature type="domain" description="HTH myb-type" evidence="1">
    <location>
        <begin position="404"/>
        <end position="460"/>
    </location>
</feature>
<feature type="DNA-binding region" description="H-T-H motif" evidence="1">
    <location>
        <begin position="431"/>
        <end position="456"/>
    </location>
</feature>
<feature type="region of interest" description="Disordered" evidence="2">
    <location>
        <begin position="376"/>
        <end position="414"/>
    </location>
</feature>
<feature type="region of interest" description="Disordered" evidence="2">
    <location>
        <begin position="495"/>
        <end position="562"/>
    </location>
</feature>
<feature type="compositionally biased region" description="Low complexity" evidence="2">
    <location>
        <begin position="377"/>
        <end position="400"/>
    </location>
</feature>
<feature type="compositionally biased region" description="Polar residues" evidence="2">
    <location>
        <begin position="496"/>
        <end position="522"/>
    </location>
</feature>
<feature type="compositionally biased region" description="Polar residues" evidence="2">
    <location>
        <begin position="532"/>
        <end position="552"/>
    </location>
</feature>
<feature type="sequence conflict" description="In Ref. 1; CAA49191." evidence="8" ref="1">
    <original>E</original>
    <variation>R</variation>
    <location>
        <position position="71"/>
    </location>
</feature>
<feature type="sequence conflict" description="In Ref. 1; CAA49191." evidence="8" ref="1">
    <original>DAA</original>
    <variation>ERR</variation>
    <location>
        <begin position="371"/>
        <end position="373"/>
    </location>
</feature>
<feature type="helix" evidence="10">
    <location>
        <begin position="12"/>
        <end position="15"/>
    </location>
</feature>
<feature type="turn" evidence="10">
    <location>
        <begin position="16"/>
        <end position="18"/>
    </location>
</feature>
<feature type="helix" evidence="10">
    <location>
        <begin position="19"/>
        <end position="21"/>
    </location>
</feature>
<feature type="helix" evidence="10">
    <location>
        <begin position="24"/>
        <end position="31"/>
    </location>
</feature>
<feature type="helix" evidence="10">
    <location>
        <begin position="33"/>
        <end position="49"/>
    </location>
</feature>
<feature type="strand" evidence="10">
    <location>
        <begin position="51"/>
        <end position="54"/>
    </location>
</feature>
<feature type="helix" evidence="10">
    <location>
        <begin position="55"/>
        <end position="58"/>
    </location>
</feature>
<feature type="helix" evidence="10">
    <location>
        <begin position="70"/>
        <end position="86"/>
    </location>
</feature>
<feature type="strand" evidence="10">
    <location>
        <begin position="92"/>
        <end position="95"/>
    </location>
</feature>
<feature type="helix" evidence="10">
    <location>
        <begin position="98"/>
        <end position="101"/>
    </location>
</feature>
<feature type="turn" evidence="10">
    <location>
        <begin position="103"/>
        <end position="105"/>
    </location>
</feature>
<feature type="helix" evidence="10">
    <location>
        <begin position="114"/>
        <end position="116"/>
    </location>
</feature>
<feature type="helix" evidence="10">
    <location>
        <begin position="120"/>
        <end position="139"/>
    </location>
</feature>
<feature type="strand" evidence="10">
    <location>
        <begin position="143"/>
        <end position="145"/>
    </location>
</feature>
<feature type="helix" evidence="10">
    <location>
        <begin position="148"/>
        <end position="158"/>
    </location>
</feature>
<feature type="helix" evidence="10">
    <location>
        <begin position="178"/>
        <end position="198"/>
    </location>
</feature>
<feature type="helix" evidence="10">
    <location>
        <begin position="208"/>
        <end position="218"/>
    </location>
</feature>
<feature type="helix" evidence="10">
    <location>
        <begin position="223"/>
        <end position="232"/>
    </location>
</feature>
<feature type="helix" evidence="10">
    <location>
        <begin position="238"/>
        <end position="240"/>
    </location>
</feature>
<feature type="helix" evidence="10">
    <location>
        <begin position="243"/>
        <end position="260"/>
    </location>
</feature>
<feature type="helix" evidence="10">
    <location>
        <begin position="265"/>
        <end position="271"/>
    </location>
</feature>
<feature type="helix" evidence="10">
    <location>
        <begin position="274"/>
        <end position="287"/>
    </location>
</feature>
<feature type="helix" evidence="10">
    <location>
        <begin position="289"/>
        <end position="294"/>
    </location>
</feature>
<feature type="helix" evidence="9">
    <location>
        <begin position="414"/>
        <end position="427"/>
    </location>
</feature>
<feature type="helix" evidence="9">
    <location>
        <begin position="431"/>
        <end position="438"/>
    </location>
</feature>
<feature type="turn" evidence="9">
    <location>
        <begin position="447"/>
        <end position="450"/>
    </location>
</feature>
<feature type="helix" evidence="9">
    <location>
        <begin position="453"/>
        <end position="470"/>
    </location>
</feature>
<feature type="helix" evidence="9">
    <location>
        <begin position="476"/>
        <end position="478"/>
    </location>
</feature>
<organism>
    <name type="scientific">Saccharomyces cerevisiae (strain ATCC 204508 / S288c)</name>
    <name type="common">Baker's yeast</name>
    <dbReference type="NCBI Taxonomy" id="559292"/>
    <lineage>
        <taxon>Eukaryota</taxon>
        <taxon>Fungi</taxon>
        <taxon>Dikarya</taxon>
        <taxon>Ascomycota</taxon>
        <taxon>Saccharomycotina</taxon>
        <taxon>Saccharomycetes</taxon>
        <taxon>Saccharomycetales</taxon>
        <taxon>Saccharomycetaceae</taxon>
        <taxon>Saccharomyces</taxon>
    </lineage>
</organism>
<comment type="function">
    <text evidence="3 4 5 7">Binds the telomeric double-stranded TTAGGG repeat and negatively regulates telomere length. Involved in the regulation of gene expression. 52 binding sites have been identified, distributed over 15 chromosomes. A member of the general regulatory factors (GRFs) which act as genome partitioners. Acts as a chromatin insulator which are known as STARs (Subtelomeric anti-silencing region). STARs prevent negative or positive transcription influence by extending across chromatin to a promoter.</text>
</comment>
<comment type="subunit">
    <text evidence="8">Homodimer.</text>
</comment>
<comment type="interaction">
    <interactant intactId="EBI-19005">
        <id>Q02457</id>
    </interactant>
    <interactant intactId="EBI-30350">
        <id>Q05934</id>
        <label>VID22</label>
    </interactant>
    <organismsDiffer>false</organismsDiffer>
    <experiments>3</experiments>
</comment>
<comment type="subcellular location">
    <subcellularLocation>
        <location evidence="1 3">Nucleus</location>
    </subcellularLocation>
    <subcellularLocation>
        <location evidence="3">Chromosome</location>
        <location evidence="3">Telomere</location>
    </subcellularLocation>
    <text>Localizes to synapsed chromosomes during meiosis.</text>
</comment>
<comment type="miscellaneous">
    <text evidence="6">Present with 6380 molecules/cell in log phase SD medium.</text>
</comment>
<reference key="1">
    <citation type="journal article" date="1993" name="Mol. Cell. Biol.">
        <title>An essential yeast gene encoding a TTAGGG repeat-binding protein.</title>
        <authorList>
            <person name="Brigati C."/>
            <person name="Kurtz S."/>
            <person name="Balderes D."/>
            <person name="Vidali G."/>
            <person name="Shore D.M."/>
        </authorList>
    </citation>
    <scope>NUCLEOTIDE SEQUENCE [GENOMIC DNA]</scope>
    <source>
        <strain>LN224</strain>
    </source>
</reference>
<reference key="2">
    <citation type="journal article" date="1997" name="Nature">
        <title>The nucleotide sequence of Saccharomyces cerevisiae chromosome XVI.</title>
        <authorList>
            <person name="Bussey H."/>
            <person name="Storms R.K."/>
            <person name="Ahmed A."/>
            <person name="Albermann K."/>
            <person name="Allen E."/>
            <person name="Ansorge W."/>
            <person name="Araujo R."/>
            <person name="Aparicio A."/>
            <person name="Barrell B.G."/>
            <person name="Badcock K."/>
            <person name="Benes V."/>
            <person name="Botstein D."/>
            <person name="Bowman S."/>
            <person name="Brueckner M."/>
            <person name="Carpenter J."/>
            <person name="Cherry J.M."/>
            <person name="Chung E."/>
            <person name="Churcher C.M."/>
            <person name="Coster F."/>
            <person name="Davis K."/>
            <person name="Davis R.W."/>
            <person name="Dietrich F.S."/>
            <person name="Delius H."/>
            <person name="DiPaolo T."/>
            <person name="Dubois E."/>
            <person name="Duesterhoeft A."/>
            <person name="Duncan M."/>
            <person name="Floeth M."/>
            <person name="Fortin N."/>
            <person name="Friesen J.D."/>
            <person name="Fritz C."/>
            <person name="Goffeau A."/>
            <person name="Hall J."/>
            <person name="Hebling U."/>
            <person name="Heumann K."/>
            <person name="Hilbert H."/>
            <person name="Hillier L.W."/>
            <person name="Hunicke-Smith S."/>
            <person name="Hyman R.W."/>
            <person name="Johnston M."/>
            <person name="Kalman S."/>
            <person name="Kleine K."/>
            <person name="Komp C."/>
            <person name="Kurdi O."/>
            <person name="Lashkari D."/>
            <person name="Lew H."/>
            <person name="Lin A."/>
            <person name="Lin D."/>
            <person name="Louis E.J."/>
            <person name="Marathe R."/>
            <person name="Messenguy F."/>
            <person name="Mewes H.-W."/>
            <person name="Mirtipati S."/>
            <person name="Moestl D."/>
            <person name="Mueller-Auer S."/>
            <person name="Namath A."/>
            <person name="Nentwich U."/>
            <person name="Oefner P."/>
            <person name="Pearson D."/>
            <person name="Petel F.X."/>
            <person name="Pohl T.M."/>
            <person name="Purnelle B."/>
            <person name="Rajandream M.A."/>
            <person name="Rechmann S."/>
            <person name="Rieger M."/>
            <person name="Riles L."/>
            <person name="Roberts D."/>
            <person name="Schaefer M."/>
            <person name="Scharfe M."/>
            <person name="Scherens B."/>
            <person name="Schramm S."/>
            <person name="Schroeder M."/>
            <person name="Sdicu A.-M."/>
            <person name="Tettelin H."/>
            <person name="Urrestarazu L.A."/>
            <person name="Ushinsky S."/>
            <person name="Vierendeels F."/>
            <person name="Vissers S."/>
            <person name="Voss H."/>
            <person name="Walsh S.V."/>
            <person name="Wambutt R."/>
            <person name="Wang Y."/>
            <person name="Wedler E."/>
            <person name="Wedler H."/>
            <person name="Winnett E."/>
            <person name="Zhong W.-W."/>
            <person name="Zollner A."/>
            <person name="Vo D.H."/>
            <person name="Hani J."/>
        </authorList>
    </citation>
    <scope>NUCLEOTIDE SEQUENCE [LARGE SCALE GENOMIC DNA]</scope>
    <source>
        <strain>ATCC 204508 / S288c</strain>
    </source>
</reference>
<reference key="3">
    <citation type="journal article" date="2014" name="G3 (Bethesda)">
        <title>The reference genome sequence of Saccharomyces cerevisiae: Then and now.</title>
        <authorList>
            <person name="Engel S.R."/>
            <person name="Dietrich F.S."/>
            <person name="Fisk D.G."/>
            <person name="Binkley G."/>
            <person name="Balakrishnan R."/>
            <person name="Costanzo M.C."/>
            <person name="Dwight S.S."/>
            <person name="Hitz B.C."/>
            <person name="Karra K."/>
            <person name="Nash R.S."/>
            <person name="Weng S."/>
            <person name="Wong E.D."/>
            <person name="Lloyd P."/>
            <person name="Skrzypek M.S."/>
            <person name="Miyasato S.R."/>
            <person name="Simison M."/>
            <person name="Cherry J.M."/>
        </authorList>
    </citation>
    <scope>GENOME REANNOTATION</scope>
    <source>
        <strain>ATCC 204508 / S288c</strain>
    </source>
</reference>
<reference key="4">
    <citation type="journal article" date="1996" name="Nucleic Acids Res.">
        <title>The telobox, a Myb-related telomeric DNA binding motif found in proteins from yeast, plants and human.</title>
        <authorList>
            <person name="Bilaud T."/>
            <person name="Koering C.E."/>
            <person name="Binet-Brasselet E."/>
            <person name="Ancelin K."/>
            <person name="Pollice A."/>
            <person name="Gasser S.M."/>
            <person name="Gilson E."/>
        </authorList>
    </citation>
    <scope>FUNCTION</scope>
</reference>
<reference key="5">
    <citation type="journal article" date="2000" name="Nucleic Acids Res.">
        <title>Identification of high affinity Tbf1p-binding sites within the budding yeast genome.</title>
        <authorList>
            <person name="Koering C.E."/>
            <person name="Fourel G."/>
            <person name="Binet-Brasselet E."/>
            <person name="Laroche T."/>
            <person name="Klein F."/>
            <person name="Gilson E."/>
        </authorList>
    </citation>
    <scope>FUNCTION</scope>
    <scope>SUBCELLULAR LOCATION</scope>
</reference>
<reference key="6">
    <citation type="journal article" date="2001" name="EMBO Rep.">
        <title>An activation-independent role of transcription factors in insulator function.</title>
        <authorList>
            <person name="Fourel G."/>
            <person name="Boscheron C."/>
            <person name="Revardel E."/>
            <person name="Lebrun E."/>
            <person name="Hu Y.-F."/>
            <person name="Simmen K.C."/>
            <person name="Mueller K."/>
            <person name="Li R."/>
            <person name="Mermod N."/>
            <person name="Gilson E."/>
        </authorList>
    </citation>
    <scope>FUNCTION</scope>
</reference>
<reference key="7">
    <citation type="journal article" date="2002" name="J. Biol. Chem.">
        <title>General regulatory factors (GRFs) as genome partitioners.</title>
        <authorList>
            <person name="Fourel G."/>
            <person name="Miyake T."/>
            <person name="Defossez P.-A."/>
            <person name="Li R."/>
            <person name="Gilson E."/>
        </authorList>
    </citation>
    <scope>FUNCTION</scope>
</reference>
<reference key="8">
    <citation type="journal article" date="2003" name="Nature">
        <title>Global analysis of protein expression in yeast.</title>
        <authorList>
            <person name="Ghaemmaghami S."/>
            <person name="Huh W.-K."/>
            <person name="Bower K."/>
            <person name="Howson R.W."/>
            <person name="Belle A."/>
            <person name="Dephoure N."/>
            <person name="O'Shea E.K."/>
            <person name="Weissman J.S."/>
        </authorList>
    </citation>
    <scope>LEVEL OF PROTEIN EXPRESSION [LARGE SCALE ANALYSIS]</scope>
</reference>
<reference key="9">
    <citation type="journal article" date="2008" name="Mol. Cell. Proteomics">
        <title>A multidimensional chromatography technology for in-depth phosphoproteome analysis.</title>
        <authorList>
            <person name="Albuquerque C.P."/>
            <person name="Smolka M.B."/>
            <person name="Payne S.H."/>
            <person name="Bafna V."/>
            <person name="Eng J."/>
            <person name="Zhou H."/>
        </authorList>
    </citation>
    <scope>IDENTIFICATION BY MASS SPECTROMETRY [LARGE SCALE ANALYSIS]</scope>
</reference>
<reference key="10">
    <citation type="journal article" date="2012" name="Proc. Natl. Acad. Sci. U.S.A.">
        <title>N-terminal acetylome analyses and functional insights of the N-terminal acetyltransferase NatB.</title>
        <authorList>
            <person name="Van Damme P."/>
            <person name="Lasa M."/>
            <person name="Polevoda B."/>
            <person name="Gazquez C."/>
            <person name="Elosegui-Artola A."/>
            <person name="Kim D.S."/>
            <person name="De Juan-Pardo E."/>
            <person name="Demeyer K."/>
            <person name="Hole K."/>
            <person name="Larrea E."/>
            <person name="Timmerman E."/>
            <person name="Prieto J."/>
            <person name="Arnesen T."/>
            <person name="Sherman F."/>
            <person name="Gevaert K."/>
            <person name="Aldabe R."/>
        </authorList>
    </citation>
    <scope>IDENTIFICATION BY MASS SPECTROMETRY [LARGE SCALE ANALYSIS]</scope>
</reference>
<name>TBF1_YEAST</name>
<accession>Q02457</accession>
<accession>D6W3N9</accession>
<evidence type="ECO:0000255" key="1">
    <source>
        <dbReference type="PROSITE-ProRule" id="PRU00625"/>
    </source>
</evidence>
<evidence type="ECO:0000256" key="2">
    <source>
        <dbReference type="SAM" id="MobiDB-lite"/>
    </source>
</evidence>
<evidence type="ECO:0000269" key="3">
    <source>
    </source>
</evidence>
<evidence type="ECO:0000269" key="4">
    <source>
    </source>
</evidence>
<evidence type="ECO:0000269" key="5">
    <source>
    </source>
</evidence>
<evidence type="ECO:0000269" key="6">
    <source>
    </source>
</evidence>
<evidence type="ECO:0000269" key="7">
    <source>
    </source>
</evidence>
<evidence type="ECO:0000305" key="8"/>
<evidence type="ECO:0007829" key="9">
    <source>
        <dbReference type="PDB" id="8X6D"/>
    </source>
</evidence>
<evidence type="ECO:0007829" key="10">
    <source>
        <dbReference type="PDB" id="8X6E"/>
    </source>
</evidence>
<keyword id="KW-0002">3D-structure</keyword>
<keyword id="KW-0131">Cell cycle</keyword>
<keyword id="KW-0158">Chromosome</keyword>
<keyword id="KW-0238">DNA-binding</keyword>
<keyword id="KW-0539">Nucleus</keyword>
<keyword id="KW-1185">Reference proteome</keyword>
<keyword id="KW-0779">Telomere</keyword>
<keyword id="KW-0804">Transcription</keyword>
<keyword id="KW-0805">Transcription regulation</keyword>
<proteinExistence type="evidence at protein level"/>